<geneLocation type="chloroplast"/>
<keyword id="KW-0002">3D-structure</keyword>
<keyword id="KW-0150">Chloroplast</keyword>
<keyword id="KW-0472">Membrane</keyword>
<keyword id="KW-0602">Photosynthesis</keyword>
<keyword id="KW-0604">Photosystem II</keyword>
<keyword id="KW-0934">Plastid</keyword>
<keyword id="KW-0674">Reaction center</keyword>
<keyword id="KW-0793">Thylakoid</keyword>
<keyword id="KW-0812">Transmembrane</keyword>
<keyword id="KW-1133">Transmembrane helix</keyword>
<dbReference type="EMBL" id="D12535">
    <property type="protein sequence ID" value="BAA02098.1"/>
    <property type="molecule type" value="Genomic_DNA"/>
</dbReference>
<dbReference type="RefSeq" id="YP_003587539.1">
    <property type="nucleotide sequence ID" value="NC_014057.1"/>
</dbReference>
<dbReference type="PDB" id="5XNL">
    <property type="method" value="EM"/>
    <property type="resolution" value="2.70 A"/>
    <property type="chains" value="M/m=1-34"/>
</dbReference>
<dbReference type="PDB" id="5XNM">
    <property type="method" value="EM"/>
    <property type="resolution" value="3.20 A"/>
    <property type="chains" value="M/m=1-34"/>
</dbReference>
<dbReference type="PDB" id="6YP7">
    <property type="method" value="EM"/>
    <property type="resolution" value="3.80 A"/>
    <property type="chains" value="M/m=1-33"/>
</dbReference>
<dbReference type="PDBsum" id="5XNL"/>
<dbReference type="PDBsum" id="5XNM"/>
<dbReference type="PDBsum" id="6YP7"/>
<dbReference type="EMDB" id="EMD-10865"/>
<dbReference type="EMDB" id="EMD-6741"/>
<dbReference type="EMDB" id="EMD-6742"/>
<dbReference type="SMR" id="P69529"/>
<dbReference type="GeneID" id="9073072"/>
<dbReference type="GO" id="GO:0009535">
    <property type="term" value="C:chloroplast thylakoid membrane"/>
    <property type="evidence" value="ECO:0007669"/>
    <property type="project" value="UniProtKB-SubCell"/>
</dbReference>
<dbReference type="GO" id="GO:0009523">
    <property type="term" value="C:photosystem II"/>
    <property type="evidence" value="ECO:0007669"/>
    <property type="project" value="UniProtKB-KW"/>
</dbReference>
<dbReference type="GO" id="GO:0019684">
    <property type="term" value="P:photosynthesis, light reaction"/>
    <property type="evidence" value="ECO:0007669"/>
    <property type="project" value="InterPro"/>
</dbReference>
<dbReference type="HAMAP" id="MF_00438">
    <property type="entry name" value="PSII_PsbM"/>
    <property type="match status" value="1"/>
</dbReference>
<dbReference type="InterPro" id="IPR007826">
    <property type="entry name" value="PSII_PsbM"/>
</dbReference>
<dbReference type="InterPro" id="IPR037269">
    <property type="entry name" value="PSII_PsbM_sf"/>
</dbReference>
<dbReference type="NCBIfam" id="TIGR03038">
    <property type="entry name" value="PS_II_psbM"/>
    <property type="match status" value="1"/>
</dbReference>
<dbReference type="PANTHER" id="PTHR35774">
    <property type="entry name" value="PHOTOSYSTEM II REACTION CENTER PROTEIN M"/>
    <property type="match status" value="1"/>
</dbReference>
<dbReference type="PANTHER" id="PTHR35774:SF1">
    <property type="entry name" value="PHOTOSYSTEM II REACTION CENTER PROTEIN M"/>
    <property type="match status" value="1"/>
</dbReference>
<dbReference type="Pfam" id="PF05151">
    <property type="entry name" value="PsbM"/>
    <property type="match status" value="1"/>
</dbReference>
<dbReference type="SUPFAM" id="SSF161033">
    <property type="entry name" value="Photosystem II reaction center protein M, PsbM"/>
    <property type="match status" value="1"/>
</dbReference>
<gene>
    <name evidence="1" type="primary">psbM</name>
</gene>
<name>PSBM_PEA</name>
<reference key="1">
    <citation type="journal article" date="1986" name="Plant Mol. Biol.">
        <title>Sequence of two genes in pea chloroplast DNA coding for 84 and 82 kD polypeptides of the photosystem I complex.</title>
        <authorList>
            <person name="Lehmbeck J."/>
            <person name="Rasmussen O.F."/>
            <person name="Bookjans G.B."/>
            <person name="Jepsen B.R."/>
            <person name="Stummann B.M."/>
            <person name="Henningsen K.W."/>
        </authorList>
        <dbReference type="AGRICOLA" id="IND87003969"/>
    </citation>
    <scope>NUCLEOTIDE SEQUENCE [GENOMIC DNA]</scope>
</reference>
<reference key="2">
    <citation type="journal article" date="1993" name="EMBO J.">
        <title>Detection and characterization of a plastid envelope DNA-binding protein which may anchor plastid nucleoids.</title>
        <authorList>
            <person name="Sato N."/>
            <person name="Albrieux C."/>
            <person name="Joyard J."/>
            <person name="Douce R."/>
            <person name="Kuroiwa T."/>
        </authorList>
    </citation>
    <scope>NUCLEOTIDE SEQUENCE [GENOMIC DNA]</scope>
</reference>
<organism>
    <name type="scientific">Pisum sativum</name>
    <name type="common">Garden pea</name>
    <name type="synonym">Lathyrus oleraceus</name>
    <dbReference type="NCBI Taxonomy" id="3888"/>
    <lineage>
        <taxon>Eukaryota</taxon>
        <taxon>Viridiplantae</taxon>
        <taxon>Streptophyta</taxon>
        <taxon>Embryophyta</taxon>
        <taxon>Tracheophyta</taxon>
        <taxon>Spermatophyta</taxon>
        <taxon>Magnoliopsida</taxon>
        <taxon>eudicotyledons</taxon>
        <taxon>Gunneridae</taxon>
        <taxon>Pentapetalae</taxon>
        <taxon>rosids</taxon>
        <taxon>fabids</taxon>
        <taxon>Fabales</taxon>
        <taxon>Fabaceae</taxon>
        <taxon>Papilionoideae</taxon>
        <taxon>50 kb inversion clade</taxon>
        <taxon>NPAAA clade</taxon>
        <taxon>Hologalegina</taxon>
        <taxon>IRL clade</taxon>
        <taxon>Fabeae</taxon>
        <taxon>Pisum</taxon>
    </lineage>
</organism>
<comment type="function">
    <text evidence="1">One of the components of the core complex of photosystem II (PSII). PSII is a light-driven water:plastoquinone oxidoreductase that uses light energy to abstract electrons from H(2)O, generating O(2) and a proton gradient subsequently used for ATP formation. It consists of a core antenna complex that captures photons, and an electron transfer chain that converts photonic excitation into a charge separation. This subunit is found at the monomer-monomer interface.</text>
</comment>
<comment type="subunit">
    <text evidence="1">PSII is composed of 1 copy each of membrane proteins PsbA, PsbB, PsbC, PsbD, PsbE, PsbF, PsbH, PsbI, PsbJ, PsbK, PsbL, PsbM, PsbT, PsbX, PsbY, PsbZ, Psb30/Ycf12, at least 3 peripheral proteins of the oxygen-evolving complex and a large number of cofactors. It forms dimeric complexes.</text>
</comment>
<comment type="subcellular location">
    <subcellularLocation>
        <location evidence="1">Plastid</location>
        <location evidence="1">Chloroplast thylakoid membrane</location>
        <topology evidence="1">Single-pass membrane protein</topology>
    </subcellularLocation>
</comment>
<comment type="similarity">
    <text evidence="1">Belongs to the PsbM family.</text>
</comment>
<accession>P69529</accession>
<accession>P34833</accession>
<proteinExistence type="evidence at protein level"/>
<feature type="chain" id="PRO_0000217569" description="Photosystem II reaction center protein M">
    <location>
        <begin position="1"/>
        <end position="34"/>
    </location>
</feature>
<feature type="transmembrane region" description="Helical" evidence="1">
    <location>
        <begin position="5"/>
        <end position="25"/>
    </location>
</feature>
<feature type="helix" evidence="2">
    <location>
        <begin position="6"/>
        <end position="32"/>
    </location>
</feature>
<protein>
    <recommendedName>
        <fullName evidence="1">Photosystem II reaction center protein M</fullName>
        <shortName evidence="1">PSII-M</shortName>
    </recommendedName>
</protein>
<sequence>MEVNILAFIATALFILVPTAFLLIIYVKTVSQSD</sequence>
<evidence type="ECO:0000255" key="1">
    <source>
        <dbReference type="HAMAP-Rule" id="MF_00438"/>
    </source>
</evidence>
<evidence type="ECO:0007829" key="2">
    <source>
        <dbReference type="PDB" id="5XNL"/>
    </source>
</evidence>